<organism>
    <name type="scientific">Amanita fuligineoides</name>
    <dbReference type="NCBI Taxonomy" id="580329"/>
    <lineage>
        <taxon>Eukaryota</taxon>
        <taxon>Fungi</taxon>
        <taxon>Dikarya</taxon>
        <taxon>Basidiomycota</taxon>
        <taxon>Agaricomycotina</taxon>
        <taxon>Agaricomycetes</taxon>
        <taxon>Agaricomycetidae</taxon>
        <taxon>Agaricales</taxon>
        <taxon>Pluteineae</taxon>
        <taxon>Amanitaceae</taxon>
        <taxon>Amanita</taxon>
    </lineage>
</organism>
<reference key="1">
    <citation type="journal article" date="2014" name="Toxicon">
        <title>The molecular diversity of toxin gene families in lethal Amanita mushrooms.</title>
        <authorList>
            <person name="Li P."/>
            <person name="Deng W."/>
            <person name="Li T."/>
        </authorList>
    </citation>
    <scope>NUCLEOTIDE SEQUENCE [GENOMIC DNA]</scope>
    <scope>FUNCTION</scope>
</reference>
<reference key="2">
    <citation type="journal article" date="2002" name="J. Toxicol. Clin. Toxicol.">
        <title>Treatment of amatoxin poisoning: 20-year retrospective analysis.</title>
        <authorList>
            <person name="Enjalbert F."/>
            <person name="Rapior S."/>
            <person name="Nouguier-Soule J."/>
            <person name="Guillon S."/>
            <person name="Amouroux N."/>
            <person name="Cabot C."/>
        </authorList>
    </citation>
    <scope>REVIEW ON TOXICITY</scope>
</reference>
<dbReference type="EMBL" id="KF552095">
    <property type="protein sequence ID" value="AHB18723.1"/>
    <property type="molecule type" value="Genomic_DNA"/>
</dbReference>
<dbReference type="EMBL" id="KF156783">
    <property type="protein sequence ID" value="AGO98242.1"/>
    <property type="molecule type" value="Genomic_DNA"/>
</dbReference>
<dbReference type="EMBL" id="KF546283">
    <property type="protein sequence ID" value="AHX98307.1"/>
    <property type="molecule type" value="Genomic_DNA"/>
</dbReference>
<dbReference type="GO" id="GO:0090729">
    <property type="term" value="F:toxin activity"/>
    <property type="evidence" value="ECO:0007669"/>
    <property type="project" value="UniProtKB-KW"/>
</dbReference>
<dbReference type="InterPro" id="IPR027582">
    <property type="entry name" value="Amanitin/phalloidin"/>
</dbReference>
<dbReference type="NCBIfam" id="TIGR04309">
    <property type="entry name" value="amanitin"/>
    <property type="match status" value="1"/>
</dbReference>
<dbReference type="Pfam" id="PF24112">
    <property type="entry name" value="Amanitin"/>
    <property type="match status" value="1"/>
</dbReference>
<proteinExistence type="inferred from homology"/>
<accession>A0A023IWE3</accession>
<accession>S4WL84</accession>
<feature type="propeptide" id="PRO_0000443573" evidence="2">
    <location>
        <begin position="1"/>
        <end position="10"/>
    </location>
</feature>
<feature type="peptide" id="PRO_0000443574" description="Alpha-amanitin" evidence="2">
    <location>
        <begin position="11"/>
        <end position="18"/>
    </location>
</feature>
<feature type="propeptide" id="PRO_0000443575" evidence="2">
    <location>
        <begin position="19"/>
        <end position="33"/>
    </location>
</feature>
<feature type="modified residue" description="(3R,4R)-4,5-dihydroxyisoleucine; in form alpha-amanitin" evidence="3">
    <location>
        <position position="11"/>
    </location>
</feature>
<feature type="modified residue" description="(3R,4S)-4-hydroxyisoleucine; in form gamma-amanitin" evidence="3">
    <location>
        <position position="11"/>
    </location>
</feature>
<feature type="modified residue" description="4-hydroxyproline" evidence="3">
    <location>
        <position position="18"/>
    </location>
</feature>
<feature type="cross-link" description="Cyclopeptide (Ile-Pro)" evidence="2">
    <location>
        <begin position="11"/>
        <end position="18"/>
    </location>
</feature>
<feature type="cross-link" description="2'-cysteinyl-6'-hydroxytryptophan sulfoxide (Trp-Cys)" evidence="3">
    <location>
        <begin position="12"/>
        <end position="16"/>
    </location>
</feature>
<sequence length="33" mass="3474">MSDINATRLPIWGIGCNPCVGDEVTALLTRGEA</sequence>
<protein>
    <recommendedName>
        <fullName evidence="4">Alpha-amanitin proprotein</fullName>
    </recommendedName>
    <component>
        <recommendedName>
            <fullName evidence="4">Alpha-amanitin</fullName>
        </recommendedName>
        <alternativeName>
            <fullName evidence="4">Amatoxin</fullName>
        </alternativeName>
        <alternativeName>
            <fullName evidence="3">Gamma-amanitin</fullName>
        </alternativeName>
    </component>
</protein>
<comment type="function">
    <text evidence="6">Major toxin belonging to the bicyclic octapeptides amatoxins that acts by binding non-competitively to RNA polymerase II and greatly slowing the elongation of transcripts from target promoters (PubMed:24613547).</text>
</comment>
<comment type="PTM">
    <text evidence="1 6">Processed by the macrocyclase-peptidase enzyme POPB to yield a toxic cyclic decapeptide (PubMed:24613547). POPB first removes 10 residues from the N-terminus (By similarity). Conformational trapping of the remaining peptide forces the enzyme to release this intermediate rather than proceed to macrocyclization (By similarity). The enzyme rebinds the remaining peptide in a different conformation and catalyzes macrocyclization of the N-terminal 8 residues (By similarity).</text>
</comment>
<comment type="similarity">
    <text evidence="5">Belongs to the MSDIN fungal toxin family.</text>
</comment>
<name>AAMA1_AMAFL</name>
<evidence type="ECO:0000250" key="1">
    <source>
        <dbReference type="UniProtKB" id="A0A067SLB9"/>
    </source>
</evidence>
<evidence type="ECO:0000250" key="2">
    <source>
        <dbReference type="UniProtKB" id="A8W7M4"/>
    </source>
</evidence>
<evidence type="ECO:0000250" key="3">
    <source>
        <dbReference type="UniProtKB" id="P85421"/>
    </source>
</evidence>
<evidence type="ECO:0000303" key="4">
    <source>
    </source>
</evidence>
<evidence type="ECO:0000305" key="5"/>
<evidence type="ECO:0000305" key="6">
    <source>
    </source>
</evidence>
<keyword id="KW-0379">Hydroxylation</keyword>
<keyword id="KW-0883">Thioether bond</keyword>
<keyword id="KW-0800">Toxin</keyword>
<gene>
    <name evidence="4" type="primary">AMA</name>
</gene>